<name>IOVO_ANSCA</name>
<feature type="chain" id="PRO_0000073059" description="Ovomucoid">
    <location>
        <begin position="1" status="less than"/>
        <end position="54" status="greater than"/>
    </location>
</feature>
<feature type="domain" description="Kazal-like" evidence="1">
    <location>
        <begin position="4"/>
        <end position="54"/>
    </location>
</feature>
<feature type="site" description="Reactive bond 3">
    <location>
        <begin position="16"/>
        <end position="17"/>
    </location>
</feature>
<feature type="glycosylation site" description="N-linked (GlcNAc...) asparagine">
    <location>
        <position position="43"/>
    </location>
</feature>
<feature type="disulfide bond">
    <location>
        <begin position="6"/>
        <end position="36"/>
    </location>
</feature>
<feature type="disulfide bond">
    <location>
        <begin position="14"/>
        <end position="33"/>
    </location>
</feature>
<feature type="disulfide bond">
    <location>
        <begin position="22"/>
        <end position="54"/>
    </location>
</feature>
<feature type="non-terminal residue">
    <location>
        <position position="1"/>
    </location>
</feature>
<feature type="non-terminal residue">
    <location>
        <position position="54"/>
    </location>
</feature>
<sequence>VATVDCSDYPKPACTVEYMPLCGSDNKTYGNKCNFCNAVVDSNGTLTLSHFGKC</sequence>
<dbReference type="PIR" id="F61587">
    <property type="entry name" value="F61587"/>
</dbReference>
<dbReference type="SMR" id="P68394"/>
<dbReference type="GO" id="GO:0005576">
    <property type="term" value="C:extracellular region"/>
    <property type="evidence" value="ECO:0007669"/>
    <property type="project" value="UniProtKB-SubCell"/>
</dbReference>
<dbReference type="GO" id="GO:0004867">
    <property type="term" value="F:serine-type endopeptidase inhibitor activity"/>
    <property type="evidence" value="ECO:0007669"/>
    <property type="project" value="UniProtKB-KW"/>
</dbReference>
<dbReference type="CDD" id="cd00104">
    <property type="entry name" value="KAZAL_FS"/>
    <property type="match status" value="1"/>
</dbReference>
<dbReference type="FunFam" id="3.30.60.30:FF:000037">
    <property type="entry name" value="Ovomucoid"/>
    <property type="match status" value="1"/>
</dbReference>
<dbReference type="Gene3D" id="3.30.60.30">
    <property type="match status" value="1"/>
</dbReference>
<dbReference type="InterPro" id="IPR051597">
    <property type="entry name" value="Bifunctional_prot_inhibitor"/>
</dbReference>
<dbReference type="InterPro" id="IPR002350">
    <property type="entry name" value="Kazal_dom"/>
</dbReference>
<dbReference type="InterPro" id="IPR036058">
    <property type="entry name" value="Kazal_dom_sf"/>
</dbReference>
<dbReference type="InterPro" id="IPR001239">
    <property type="entry name" value="Prot_inh_Kazal-m"/>
</dbReference>
<dbReference type="PANTHER" id="PTHR47729:SF1">
    <property type="entry name" value="OVOMUCOID-LIKE-RELATED"/>
    <property type="match status" value="1"/>
</dbReference>
<dbReference type="PANTHER" id="PTHR47729">
    <property type="entry name" value="SERINE PEPTIDASE INHIBITOR, KAZAL TYPE 2, TANDEM DUPLICATE 1-RELATED"/>
    <property type="match status" value="1"/>
</dbReference>
<dbReference type="Pfam" id="PF00050">
    <property type="entry name" value="Kazal_1"/>
    <property type="match status" value="1"/>
</dbReference>
<dbReference type="PRINTS" id="PR00290">
    <property type="entry name" value="KAZALINHBTR"/>
</dbReference>
<dbReference type="SMART" id="SM00280">
    <property type="entry name" value="KAZAL"/>
    <property type="match status" value="1"/>
</dbReference>
<dbReference type="SUPFAM" id="SSF100895">
    <property type="entry name" value="Kazal-type serine protease inhibitors"/>
    <property type="match status" value="1"/>
</dbReference>
<dbReference type="PROSITE" id="PS00282">
    <property type="entry name" value="KAZAL_1"/>
    <property type="match status" value="1"/>
</dbReference>
<dbReference type="PROSITE" id="PS51465">
    <property type="entry name" value="KAZAL_2"/>
    <property type="match status" value="1"/>
</dbReference>
<protein>
    <recommendedName>
        <fullName>Ovomucoid</fullName>
    </recommendedName>
</protein>
<reference key="1">
    <citation type="journal article" date="1993" name="J. Protein Chem.">
        <title>Amino acid sequences of ovomucoid third domains from 27 additional species of birds.</title>
        <authorList>
            <person name="Apostol I."/>
            <person name="Giletto A."/>
            <person name="Komiyama T."/>
            <person name="Zhang W."/>
            <person name="Laskowski M. Jr."/>
        </authorList>
    </citation>
    <scope>PROTEIN SEQUENCE</scope>
</reference>
<reference key="2">
    <citation type="submission" date="1996-07" db="UniProtKB">
        <authorList>
            <person name="Laskowski M. Jr."/>
        </authorList>
    </citation>
    <scope>SEQUENCE REVISION TO 29</scope>
</reference>
<accession>P68394</accession>
<accession>P05574</accession>
<keyword id="KW-0903">Direct protein sequencing</keyword>
<keyword id="KW-1015">Disulfide bond</keyword>
<keyword id="KW-0325">Glycoprotein</keyword>
<keyword id="KW-0646">Protease inhibitor</keyword>
<keyword id="KW-0677">Repeat</keyword>
<keyword id="KW-0964">Secreted</keyword>
<keyword id="KW-0722">Serine protease inhibitor</keyword>
<evidence type="ECO:0000255" key="1">
    <source>
        <dbReference type="PROSITE-ProRule" id="PRU00798"/>
    </source>
</evidence>
<proteinExistence type="evidence at protein level"/>
<comment type="subcellular location">
    <subcellularLocation>
        <location>Secreted</location>
    </subcellularLocation>
</comment>
<comment type="domain">
    <text>Avian ovomucoid consists of three homologous, tandem Kazal family inhibitory domains.</text>
</comment>
<organism>
    <name type="scientific">Anser canagicus</name>
    <name type="common">Emperor goose</name>
    <name type="synonym">Chen canagica</name>
    <dbReference type="NCBI Taxonomy" id="107021"/>
    <lineage>
        <taxon>Eukaryota</taxon>
        <taxon>Metazoa</taxon>
        <taxon>Chordata</taxon>
        <taxon>Craniata</taxon>
        <taxon>Vertebrata</taxon>
        <taxon>Euteleostomi</taxon>
        <taxon>Archelosauria</taxon>
        <taxon>Archosauria</taxon>
        <taxon>Dinosauria</taxon>
        <taxon>Saurischia</taxon>
        <taxon>Theropoda</taxon>
        <taxon>Coelurosauria</taxon>
        <taxon>Aves</taxon>
        <taxon>Neognathae</taxon>
        <taxon>Galloanserae</taxon>
        <taxon>Anseriformes</taxon>
        <taxon>Anatidae</taxon>
        <taxon>Anserinae</taxon>
        <taxon>Anser</taxon>
    </lineage>
</organism>